<feature type="chain" id="PRO_1000072541" description="Large ribosomal subunit protein bL27">
    <location>
        <begin position="1"/>
        <end position="85"/>
    </location>
</feature>
<feature type="region of interest" description="Disordered" evidence="2">
    <location>
        <begin position="1"/>
        <end position="20"/>
    </location>
</feature>
<gene>
    <name evidence="1" type="primary">rpmA</name>
    <name type="ordered locus">Asuc_0918</name>
</gene>
<sequence>MATKKAGGSTRNGRDSEAKRLGVKRFGGESVLAGSIIVRQRGTKFHAGSNVGMGRDHTLFATADGKVKFEVKGEKSRKYVSIVTE</sequence>
<comment type="similarity">
    <text evidence="1">Belongs to the bacterial ribosomal protein bL27 family.</text>
</comment>
<evidence type="ECO:0000255" key="1">
    <source>
        <dbReference type="HAMAP-Rule" id="MF_00539"/>
    </source>
</evidence>
<evidence type="ECO:0000256" key="2">
    <source>
        <dbReference type="SAM" id="MobiDB-lite"/>
    </source>
</evidence>
<evidence type="ECO:0000305" key="3"/>
<proteinExistence type="inferred from homology"/>
<keyword id="KW-1185">Reference proteome</keyword>
<keyword id="KW-0687">Ribonucleoprotein</keyword>
<keyword id="KW-0689">Ribosomal protein</keyword>
<dbReference type="EMBL" id="CP000746">
    <property type="protein sequence ID" value="ABR74286.1"/>
    <property type="molecule type" value="Genomic_DNA"/>
</dbReference>
<dbReference type="RefSeq" id="WP_005760959.1">
    <property type="nucleotide sequence ID" value="NC_009655.1"/>
</dbReference>
<dbReference type="SMR" id="A6VMT9"/>
<dbReference type="STRING" id="339671.Asuc_0918"/>
<dbReference type="GeneID" id="93226345"/>
<dbReference type="KEGG" id="asu:Asuc_0918"/>
<dbReference type="eggNOG" id="COG0211">
    <property type="taxonomic scope" value="Bacteria"/>
</dbReference>
<dbReference type="HOGENOM" id="CLU_095424_4_1_6"/>
<dbReference type="OrthoDB" id="9803474at2"/>
<dbReference type="Proteomes" id="UP000001114">
    <property type="component" value="Chromosome"/>
</dbReference>
<dbReference type="GO" id="GO:0022625">
    <property type="term" value="C:cytosolic large ribosomal subunit"/>
    <property type="evidence" value="ECO:0007669"/>
    <property type="project" value="TreeGrafter"/>
</dbReference>
<dbReference type="GO" id="GO:0003735">
    <property type="term" value="F:structural constituent of ribosome"/>
    <property type="evidence" value="ECO:0007669"/>
    <property type="project" value="InterPro"/>
</dbReference>
<dbReference type="GO" id="GO:0006412">
    <property type="term" value="P:translation"/>
    <property type="evidence" value="ECO:0007669"/>
    <property type="project" value="UniProtKB-UniRule"/>
</dbReference>
<dbReference type="FunFam" id="2.40.50.100:FF:000001">
    <property type="entry name" value="50S ribosomal protein L27"/>
    <property type="match status" value="1"/>
</dbReference>
<dbReference type="Gene3D" id="2.40.50.100">
    <property type="match status" value="1"/>
</dbReference>
<dbReference type="HAMAP" id="MF_00539">
    <property type="entry name" value="Ribosomal_bL27"/>
    <property type="match status" value="1"/>
</dbReference>
<dbReference type="InterPro" id="IPR001684">
    <property type="entry name" value="Ribosomal_bL27"/>
</dbReference>
<dbReference type="InterPro" id="IPR018261">
    <property type="entry name" value="Ribosomal_bL27_CS"/>
</dbReference>
<dbReference type="NCBIfam" id="TIGR00062">
    <property type="entry name" value="L27"/>
    <property type="match status" value="1"/>
</dbReference>
<dbReference type="PANTHER" id="PTHR15893:SF0">
    <property type="entry name" value="LARGE RIBOSOMAL SUBUNIT PROTEIN BL27M"/>
    <property type="match status" value="1"/>
</dbReference>
<dbReference type="PANTHER" id="PTHR15893">
    <property type="entry name" value="RIBOSOMAL PROTEIN L27"/>
    <property type="match status" value="1"/>
</dbReference>
<dbReference type="Pfam" id="PF01016">
    <property type="entry name" value="Ribosomal_L27"/>
    <property type="match status" value="1"/>
</dbReference>
<dbReference type="PRINTS" id="PR00063">
    <property type="entry name" value="RIBOSOMALL27"/>
</dbReference>
<dbReference type="SUPFAM" id="SSF110324">
    <property type="entry name" value="Ribosomal L27 protein-like"/>
    <property type="match status" value="1"/>
</dbReference>
<dbReference type="PROSITE" id="PS00831">
    <property type="entry name" value="RIBOSOMAL_L27"/>
    <property type="match status" value="1"/>
</dbReference>
<name>RL27_ACTSZ</name>
<accession>A6VMT9</accession>
<reference key="1">
    <citation type="journal article" date="2010" name="BMC Genomics">
        <title>A genomic perspective on the potential of Actinobacillus succinogenes for industrial succinate production.</title>
        <authorList>
            <person name="McKinlay J.B."/>
            <person name="Laivenieks M."/>
            <person name="Schindler B.D."/>
            <person name="McKinlay A.A."/>
            <person name="Siddaramappa S."/>
            <person name="Challacombe J.F."/>
            <person name="Lowry S.R."/>
            <person name="Clum A."/>
            <person name="Lapidus A.L."/>
            <person name="Burkhart K.B."/>
            <person name="Harkins V."/>
            <person name="Vieille C."/>
        </authorList>
    </citation>
    <scope>NUCLEOTIDE SEQUENCE [LARGE SCALE GENOMIC DNA]</scope>
    <source>
        <strain>ATCC 55618 / DSM 22257 / CCUG 43843 / 130Z</strain>
    </source>
</reference>
<organism>
    <name type="scientific">Actinobacillus succinogenes (strain ATCC 55618 / DSM 22257 / CCUG 43843 / 130Z)</name>
    <dbReference type="NCBI Taxonomy" id="339671"/>
    <lineage>
        <taxon>Bacteria</taxon>
        <taxon>Pseudomonadati</taxon>
        <taxon>Pseudomonadota</taxon>
        <taxon>Gammaproteobacteria</taxon>
        <taxon>Pasteurellales</taxon>
        <taxon>Pasteurellaceae</taxon>
        <taxon>Actinobacillus</taxon>
    </lineage>
</organism>
<protein>
    <recommendedName>
        <fullName evidence="1">Large ribosomal subunit protein bL27</fullName>
    </recommendedName>
    <alternativeName>
        <fullName evidence="3">50S ribosomal protein L27</fullName>
    </alternativeName>
</protein>